<name>PETD_PROM2</name>
<sequence length="160" mass="17675">MSTLKKPDLSDPKLRAKLAKGMGHNYYGEPAWPNDLLYIFPVVILGTIACVVGLAVLDPAMLGDKANPFATPLEILPEWYLYPVFQILRVVPNKLLGIALQTLIPLGLMILPFIENVNKFSNPFRRPIAMSVFLFGTFLTIYLGIGACLPIDKSLTLGLF</sequence>
<proteinExistence type="inferred from homology"/>
<accession>A8G2Y7</accession>
<evidence type="ECO:0000255" key="1">
    <source>
        <dbReference type="HAMAP-Rule" id="MF_01344"/>
    </source>
</evidence>
<protein>
    <recommendedName>
        <fullName evidence="1">Cytochrome b6-f complex subunit 4</fullName>
    </recommendedName>
    <alternativeName>
        <fullName evidence="1">17 kDa polypeptide</fullName>
    </alternativeName>
</protein>
<comment type="function">
    <text evidence="1">Component of the cytochrome b6-f complex, which mediates electron transfer between photosystem II (PSII) and photosystem I (PSI), cyclic electron flow around PSI, and state transitions.</text>
</comment>
<comment type="subunit">
    <text evidence="1">The 4 large subunits of the cytochrome b6-f complex are cytochrome b6, subunit IV (17 kDa polypeptide, PetD), cytochrome f and the Rieske protein, while the 4 small subunits are PetG, PetL, PetM and PetN. The complex functions as a dimer.</text>
</comment>
<comment type="subcellular location">
    <subcellularLocation>
        <location evidence="1">Cellular thylakoid membrane</location>
        <topology evidence="1">Multi-pass membrane protein</topology>
    </subcellularLocation>
</comment>
<comment type="similarity">
    <text evidence="1">Belongs to the cytochrome b family. PetD subfamily.</text>
</comment>
<reference key="1">
    <citation type="journal article" date="2007" name="PLoS Genet.">
        <title>Patterns and implications of gene gain and loss in the evolution of Prochlorococcus.</title>
        <authorList>
            <person name="Kettler G.C."/>
            <person name="Martiny A.C."/>
            <person name="Huang K."/>
            <person name="Zucker J."/>
            <person name="Coleman M.L."/>
            <person name="Rodrigue S."/>
            <person name="Chen F."/>
            <person name="Lapidus A."/>
            <person name="Ferriera S."/>
            <person name="Johnson J."/>
            <person name="Steglich C."/>
            <person name="Church G.M."/>
            <person name="Richardson P."/>
            <person name="Chisholm S.W."/>
        </authorList>
    </citation>
    <scope>NUCLEOTIDE SEQUENCE [LARGE SCALE GENOMIC DNA]</scope>
    <source>
        <strain>MIT 9215</strain>
    </source>
</reference>
<dbReference type="EMBL" id="CP000825">
    <property type="protein sequence ID" value="ABV49968.1"/>
    <property type="molecule type" value="Genomic_DNA"/>
</dbReference>
<dbReference type="RefSeq" id="WP_002808353.1">
    <property type="nucleotide sequence ID" value="NC_009840.1"/>
</dbReference>
<dbReference type="SMR" id="A8G2Y7"/>
<dbReference type="STRING" id="93060.P9215_03511"/>
<dbReference type="KEGG" id="pmh:P9215_03511"/>
<dbReference type="eggNOG" id="COG1290">
    <property type="taxonomic scope" value="Bacteria"/>
</dbReference>
<dbReference type="HOGENOM" id="CLU_112652_0_0_3"/>
<dbReference type="OrthoDB" id="529454at2"/>
<dbReference type="Proteomes" id="UP000002014">
    <property type="component" value="Chromosome"/>
</dbReference>
<dbReference type="GO" id="GO:0031676">
    <property type="term" value="C:plasma membrane-derived thylakoid membrane"/>
    <property type="evidence" value="ECO:0007669"/>
    <property type="project" value="UniProtKB-SubCell"/>
</dbReference>
<dbReference type="GO" id="GO:0045158">
    <property type="term" value="F:electron transporter, transferring electrons within cytochrome b6/f complex of photosystem II activity"/>
    <property type="evidence" value="ECO:0007669"/>
    <property type="project" value="UniProtKB-UniRule"/>
</dbReference>
<dbReference type="GO" id="GO:0045156">
    <property type="term" value="F:electron transporter, transferring electrons within the cyclic electron transport pathway of photosynthesis activity"/>
    <property type="evidence" value="ECO:0007669"/>
    <property type="project" value="InterPro"/>
</dbReference>
<dbReference type="GO" id="GO:0008121">
    <property type="term" value="F:ubiquinol-cytochrome-c reductase activity"/>
    <property type="evidence" value="ECO:0007669"/>
    <property type="project" value="TreeGrafter"/>
</dbReference>
<dbReference type="GO" id="GO:0009767">
    <property type="term" value="P:photosynthetic electron transport chain"/>
    <property type="evidence" value="ECO:0007669"/>
    <property type="project" value="InterPro"/>
</dbReference>
<dbReference type="CDD" id="cd00290">
    <property type="entry name" value="cytochrome_b_C"/>
    <property type="match status" value="1"/>
</dbReference>
<dbReference type="FunFam" id="1.10.287.980:FF:000001">
    <property type="entry name" value="Cytochrome b6-f complex subunit 4"/>
    <property type="match status" value="1"/>
</dbReference>
<dbReference type="FunFam" id="1.20.5.510:FF:000002">
    <property type="entry name" value="Cytochrome b6-f complex subunit 4"/>
    <property type="match status" value="1"/>
</dbReference>
<dbReference type="Gene3D" id="1.10.287.980">
    <property type="entry name" value="plastocyanin oxidoreductase"/>
    <property type="match status" value="1"/>
</dbReference>
<dbReference type="Gene3D" id="1.20.5.510">
    <property type="entry name" value="Single helix bin"/>
    <property type="match status" value="1"/>
</dbReference>
<dbReference type="HAMAP" id="MF_01344">
    <property type="entry name" value="Cytb6_f_subIV"/>
    <property type="match status" value="1"/>
</dbReference>
<dbReference type="InterPro" id="IPR005798">
    <property type="entry name" value="Cyt_b/b6_C"/>
</dbReference>
<dbReference type="InterPro" id="IPR036150">
    <property type="entry name" value="Cyt_b/b6_C_sf"/>
</dbReference>
<dbReference type="InterPro" id="IPR005870">
    <property type="entry name" value="Cyt_b6/f_cplx_suIV"/>
</dbReference>
<dbReference type="InterPro" id="IPR048260">
    <property type="entry name" value="Cytochrome_b_C_euk/bac"/>
</dbReference>
<dbReference type="NCBIfam" id="TIGR01156">
    <property type="entry name" value="cytb6_f_IV"/>
    <property type="match status" value="1"/>
</dbReference>
<dbReference type="PANTHER" id="PTHR19271">
    <property type="entry name" value="CYTOCHROME B"/>
    <property type="match status" value="1"/>
</dbReference>
<dbReference type="PANTHER" id="PTHR19271:SF41">
    <property type="entry name" value="CYTOCHROME B_B6 C-TERMINAL REGION PROFILE DOMAIN-CONTAINING PROTEIN"/>
    <property type="match status" value="1"/>
</dbReference>
<dbReference type="Pfam" id="PF00032">
    <property type="entry name" value="Cytochrom_B_C"/>
    <property type="match status" value="1"/>
</dbReference>
<dbReference type="PIRSF" id="PIRSF000033">
    <property type="entry name" value="B6f_17K"/>
    <property type="match status" value="1"/>
</dbReference>
<dbReference type="SUPFAM" id="SSF81648">
    <property type="entry name" value="a domain/subunit of cytochrome bc1 complex (Ubiquinol-cytochrome c reductase)"/>
    <property type="match status" value="1"/>
</dbReference>
<dbReference type="PROSITE" id="PS51003">
    <property type="entry name" value="CYTB_CTER"/>
    <property type="match status" value="1"/>
</dbReference>
<feature type="chain" id="PRO_1000067695" description="Cytochrome b6-f complex subunit 4">
    <location>
        <begin position="1"/>
        <end position="160"/>
    </location>
</feature>
<feature type="transmembrane region" description="Helical" evidence="1">
    <location>
        <begin position="36"/>
        <end position="56"/>
    </location>
</feature>
<feature type="transmembrane region" description="Helical" evidence="1">
    <location>
        <begin position="95"/>
        <end position="115"/>
    </location>
</feature>
<feature type="transmembrane region" description="Helical" evidence="1">
    <location>
        <begin position="128"/>
        <end position="148"/>
    </location>
</feature>
<organism>
    <name type="scientific">Prochlorococcus marinus (strain MIT 9215)</name>
    <dbReference type="NCBI Taxonomy" id="93060"/>
    <lineage>
        <taxon>Bacteria</taxon>
        <taxon>Bacillati</taxon>
        <taxon>Cyanobacteriota</taxon>
        <taxon>Cyanophyceae</taxon>
        <taxon>Synechococcales</taxon>
        <taxon>Prochlorococcaceae</taxon>
        <taxon>Prochlorococcus</taxon>
    </lineage>
</organism>
<gene>
    <name evidence="1" type="primary">petD</name>
    <name type="ordered locus">P9215_03511</name>
</gene>
<keyword id="KW-0249">Electron transport</keyword>
<keyword id="KW-0472">Membrane</keyword>
<keyword id="KW-0602">Photosynthesis</keyword>
<keyword id="KW-0793">Thylakoid</keyword>
<keyword id="KW-0812">Transmembrane</keyword>
<keyword id="KW-1133">Transmembrane helix</keyword>
<keyword id="KW-0813">Transport</keyword>